<organism>
    <name type="scientific">Mannheimia succiniciproducens (strain KCTC 0769BP / MBEL55E)</name>
    <dbReference type="NCBI Taxonomy" id="221988"/>
    <lineage>
        <taxon>Bacteria</taxon>
        <taxon>Pseudomonadati</taxon>
        <taxon>Pseudomonadota</taxon>
        <taxon>Gammaproteobacteria</taxon>
        <taxon>Pasteurellales</taxon>
        <taxon>Pasteurellaceae</taxon>
        <taxon>Basfia</taxon>
    </lineage>
</organism>
<dbReference type="EMBL" id="AE016827">
    <property type="protein sequence ID" value="AAU37654.1"/>
    <property type="status" value="ALT_INIT"/>
    <property type="molecule type" value="Genomic_DNA"/>
</dbReference>
<dbReference type="RefSeq" id="WP_041639709.1">
    <property type="nucleotide sequence ID" value="NC_006300.1"/>
</dbReference>
<dbReference type="SMR" id="Q65TQ6"/>
<dbReference type="STRING" id="221988.MS1047"/>
<dbReference type="KEGG" id="msu:MS1047"/>
<dbReference type="eggNOG" id="COG3100">
    <property type="taxonomic scope" value="Bacteria"/>
</dbReference>
<dbReference type="HOGENOM" id="CLU_155118_1_0_6"/>
<dbReference type="OrthoDB" id="7062382at2"/>
<dbReference type="Proteomes" id="UP000000607">
    <property type="component" value="Chromosome"/>
</dbReference>
<dbReference type="Gene3D" id="3.10.510.20">
    <property type="entry name" value="YcgL domain"/>
    <property type="match status" value="1"/>
</dbReference>
<dbReference type="HAMAP" id="MF_01866">
    <property type="entry name" value="UPF0745"/>
    <property type="match status" value="1"/>
</dbReference>
<dbReference type="InterPro" id="IPR038068">
    <property type="entry name" value="YcgL-like_sf"/>
</dbReference>
<dbReference type="InterPro" id="IPR027354">
    <property type="entry name" value="YcgL_dom"/>
</dbReference>
<dbReference type="PANTHER" id="PTHR38109">
    <property type="entry name" value="PROTEIN YCGL"/>
    <property type="match status" value="1"/>
</dbReference>
<dbReference type="PANTHER" id="PTHR38109:SF1">
    <property type="entry name" value="PROTEIN YCGL"/>
    <property type="match status" value="1"/>
</dbReference>
<dbReference type="Pfam" id="PF05166">
    <property type="entry name" value="YcgL"/>
    <property type="match status" value="1"/>
</dbReference>
<dbReference type="SUPFAM" id="SSF160191">
    <property type="entry name" value="YcgL-like"/>
    <property type="match status" value="1"/>
</dbReference>
<dbReference type="PROSITE" id="PS51648">
    <property type="entry name" value="YCGL"/>
    <property type="match status" value="1"/>
</dbReference>
<reference key="1">
    <citation type="journal article" date="2004" name="Nat. Biotechnol.">
        <title>The genome sequence of the capnophilic rumen bacterium Mannheimia succiniciproducens.</title>
        <authorList>
            <person name="Hong S.H."/>
            <person name="Kim J.S."/>
            <person name="Lee S.Y."/>
            <person name="In Y.H."/>
            <person name="Choi S.S."/>
            <person name="Rih J.-K."/>
            <person name="Kim C.H."/>
            <person name="Jeong H."/>
            <person name="Hur C.G."/>
            <person name="Kim J.J."/>
        </authorList>
    </citation>
    <scope>NUCLEOTIDE SEQUENCE [LARGE SCALE GENOMIC DNA]</scope>
    <source>
        <strain>KCTC 0769BP / MBEL55E</strain>
    </source>
</reference>
<sequence length="102" mass="12041">MLCAIYKSKKKEGMYLYVAKRDYFDEVPETLKMAFGTPNFVMLFNLLGEKKLVRAENQEVLKHIQEQGFYLQMPPKQESLFEQFKAEQKAKQTKNKTALKVR</sequence>
<evidence type="ECO:0000255" key="1">
    <source>
        <dbReference type="HAMAP-Rule" id="MF_01866"/>
    </source>
</evidence>
<evidence type="ECO:0000305" key="2"/>
<protein>
    <recommendedName>
        <fullName evidence="1">YcgL domain-containing protein MS1047</fullName>
    </recommendedName>
</protein>
<gene>
    <name type="ordered locus">MS1047</name>
</gene>
<name>Y1047_MANSM</name>
<feature type="chain" id="PRO_0000375318" description="YcgL domain-containing protein MS1047">
    <location>
        <begin position="1"/>
        <end position="102"/>
    </location>
</feature>
<feature type="domain" description="YcgL" evidence="1">
    <location>
        <begin position="1"/>
        <end position="85"/>
    </location>
</feature>
<accession>Q65TQ6</accession>
<comment type="sequence caution" evidence="2">
    <conflict type="erroneous initiation">
        <sequence resource="EMBL-CDS" id="AAU37654"/>
    </conflict>
</comment>
<proteinExistence type="inferred from homology"/>